<sequence length="574" mass="64095">MEPNSLRTKVPAFLSDLGKATLRGIRKCPRCGTYNGTRGLSCKNKTCGTIFRYGARKQPSVEAVKIITGSDLQVYSVRQRDRGPDYRCFVELGVSETTIQTVDGTIITQLSSGRCYVPSCLKAATQGVVENQCQHIKLAVNCQAEATPLTLKSSVLNAMQASPETKQTIWQLATEPTGPLVQRITKNILVVKCKASQKHSLGYLHTSFVQKISAKSLPERRFFCSCQTLKSHKSNASKDEVAQRCIHFFACICAFASDETLAQEFSDFLNFDSSGLKEIIVPQLGCHSESTVSACESTASKSKKRRKDEVSGAQRNSSPLPQDAVSSNLRKSGLKKPVVASSLKRQACGQLLDEAQVTLSFQDWLASVTERIHQTMHYQFDGKPEPLVFHIPQSFFDALQQRISIGSAKKRLPNSTTAFVRKDALPLGTFSKYTWHITNILQVKQILDTPEMPLEITRSFIQNRDGTYELFKCPKVEVESIAETYGRIEKQPVLRPLELKTFLKVGNTSPDQKEPTPFIIEWIPDILPQSKIGELRIKFEYGHHRNGHVAEYQDHRPALDQPLELAPLTTITFP</sequence>
<protein>
    <recommendedName>
        <fullName>Uncharacterized protein C2orf42 homolog</fullName>
    </recommendedName>
</protein>
<proteinExistence type="evidence at transcript level"/>
<evidence type="ECO:0000256" key="1">
    <source>
        <dbReference type="SAM" id="MobiDB-lite"/>
    </source>
</evidence>
<evidence type="ECO:0000305" key="2"/>
<name>CB042_MACFA</name>
<reference key="1">
    <citation type="submission" date="2005-06" db="EMBL/GenBank/DDBJ databases">
        <title>DNA sequences of macaque genes expressed in brain or testis and its evolutionary implications.</title>
        <authorList>
            <consortium name="International consortium for macaque cDNA sequencing and analysis"/>
        </authorList>
    </citation>
    <scope>NUCLEOTIDE SEQUENCE [LARGE SCALE MRNA]</scope>
    <source>
        <tissue>Testis</tissue>
    </source>
</reference>
<dbReference type="EMBL" id="AB168441">
    <property type="protein sequence ID" value="BAE00561.1"/>
    <property type="molecule type" value="mRNA"/>
</dbReference>
<dbReference type="EMBL" id="AB168290">
    <property type="protein sequence ID" value="BAE00414.1"/>
    <property type="molecule type" value="mRNA"/>
</dbReference>
<dbReference type="RefSeq" id="NP_001270453.1">
    <property type="nucleotide sequence ID" value="NM_001283524.1"/>
</dbReference>
<dbReference type="RefSeq" id="NP_001270490.1">
    <property type="nucleotide sequence ID" value="NM_001283561.1"/>
</dbReference>
<dbReference type="STRING" id="9541.ENSMFAP00000010041"/>
<dbReference type="Ensembl" id="ENSMFAT00000071860.2">
    <property type="protein sequence ID" value="ENSMFAP00000060357.1"/>
    <property type="gene ID" value="ENSMFAG00000046692.2"/>
</dbReference>
<dbReference type="eggNOG" id="ENOG502R3NH">
    <property type="taxonomic scope" value="Eukaryota"/>
</dbReference>
<dbReference type="GeneTree" id="ENSGT00390000011031"/>
<dbReference type="Proteomes" id="UP000233100">
    <property type="component" value="Chromosome 13"/>
</dbReference>
<dbReference type="Bgee" id="ENSMFAG00000046692">
    <property type="expression patterns" value="Expressed in liver and 13 other cell types or tissues"/>
</dbReference>
<dbReference type="GO" id="GO:0005654">
    <property type="term" value="C:nucleoplasm"/>
    <property type="evidence" value="ECO:0007669"/>
    <property type="project" value="Ensembl"/>
</dbReference>
<dbReference type="InterPro" id="IPR026049">
    <property type="entry name" value="C2orf42"/>
</dbReference>
<dbReference type="InterPro" id="IPR029269">
    <property type="entry name" value="Zf-tcix"/>
</dbReference>
<dbReference type="PANTHER" id="PTHR13518:SF1">
    <property type="entry name" value="C2ORF42 HOMOLOG"/>
    <property type="match status" value="1"/>
</dbReference>
<dbReference type="PANTHER" id="PTHR13518">
    <property type="entry name" value="PUTATIVE TREBLE-CLEF ZINC-FINGER C2ORF42 FAMILY MEMBER"/>
    <property type="match status" value="1"/>
</dbReference>
<dbReference type="Pfam" id="PF14952">
    <property type="entry name" value="zf-tcix"/>
    <property type="match status" value="1"/>
</dbReference>
<gene>
    <name type="ORF">QtsA-11015</name>
</gene>
<keyword id="KW-1185">Reference proteome</keyword>
<organism>
    <name type="scientific">Macaca fascicularis</name>
    <name type="common">Crab-eating macaque</name>
    <name type="synonym">Cynomolgus monkey</name>
    <dbReference type="NCBI Taxonomy" id="9541"/>
    <lineage>
        <taxon>Eukaryota</taxon>
        <taxon>Metazoa</taxon>
        <taxon>Chordata</taxon>
        <taxon>Craniata</taxon>
        <taxon>Vertebrata</taxon>
        <taxon>Euteleostomi</taxon>
        <taxon>Mammalia</taxon>
        <taxon>Eutheria</taxon>
        <taxon>Euarchontoglires</taxon>
        <taxon>Primates</taxon>
        <taxon>Haplorrhini</taxon>
        <taxon>Catarrhini</taxon>
        <taxon>Cercopithecidae</taxon>
        <taxon>Cercopithecinae</taxon>
        <taxon>Macaca</taxon>
    </lineage>
</organism>
<accession>Q4R907</accession>
<accession>Q4R8L1</accession>
<feature type="chain" id="PRO_0000300122" description="Uncharacterized protein C2orf42 homolog">
    <location>
        <begin position="1"/>
        <end position="574"/>
    </location>
</feature>
<feature type="region of interest" description="Disordered" evidence="1">
    <location>
        <begin position="297"/>
        <end position="327"/>
    </location>
</feature>
<feature type="compositionally biased region" description="Polar residues" evidence="1">
    <location>
        <begin position="313"/>
        <end position="327"/>
    </location>
</feature>
<feature type="sequence conflict" description="In Ref. 1; BAE00561." evidence="2" ref="1">
    <original>L</original>
    <variation>V</variation>
    <location>
        <position position="72"/>
    </location>
</feature>
<feature type="sequence conflict" description="In Ref. 1; BAE00561." evidence="2" ref="1">
    <original>V</original>
    <variation>A</variation>
    <location>
        <position position="241"/>
    </location>
</feature>
<feature type="sequence conflict" description="In Ref. 1; BAE00561." evidence="2" ref="1">
    <original>V</original>
    <variation>A</variation>
    <location>
        <position position="292"/>
    </location>
</feature>